<proteinExistence type="inferred from homology"/>
<accession>Q1JCP4</accession>
<evidence type="ECO:0000255" key="1">
    <source>
        <dbReference type="HAMAP-Rule" id="MF_00402"/>
    </source>
</evidence>
<evidence type="ECO:0000305" key="2"/>
<keyword id="KW-0687">Ribonucleoprotein</keyword>
<keyword id="KW-0689">Ribosomal protein</keyword>
<comment type="function">
    <text evidence="1">This protein is located at the 30S-50S ribosomal subunit interface and may play a role in the structure and function of the aminoacyl-tRNA binding site.</text>
</comment>
<comment type="similarity">
    <text evidence="1">Belongs to the bacterial ribosomal protein bL19 family.</text>
</comment>
<feature type="chain" id="PRO_0000252548" description="Large ribosomal subunit protein bL19">
    <location>
        <begin position="1"/>
        <end position="115"/>
    </location>
</feature>
<name>RL19_STRPB</name>
<organism>
    <name type="scientific">Streptococcus pyogenes serotype M12 (strain MGAS2096)</name>
    <dbReference type="NCBI Taxonomy" id="370553"/>
    <lineage>
        <taxon>Bacteria</taxon>
        <taxon>Bacillati</taxon>
        <taxon>Bacillota</taxon>
        <taxon>Bacilli</taxon>
        <taxon>Lactobacillales</taxon>
        <taxon>Streptococcaceae</taxon>
        <taxon>Streptococcus</taxon>
    </lineage>
</organism>
<reference key="1">
    <citation type="journal article" date="2006" name="Proc. Natl. Acad. Sci. U.S.A.">
        <title>Molecular genetic anatomy of inter- and intraserotype variation in the human bacterial pathogen group A Streptococcus.</title>
        <authorList>
            <person name="Beres S.B."/>
            <person name="Richter E.W."/>
            <person name="Nagiec M.J."/>
            <person name="Sumby P."/>
            <person name="Porcella S.F."/>
            <person name="DeLeo F.R."/>
            <person name="Musser J.M."/>
        </authorList>
    </citation>
    <scope>NUCLEOTIDE SEQUENCE [LARGE SCALE GENOMIC DNA]</scope>
    <source>
        <strain>MGAS2096</strain>
    </source>
</reference>
<gene>
    <name evidence="1" type="primary">rplS</name>
    <name type="ordered locus">MGAS2096_Spy0612</name>
</gene>
<dbReference type="EMBL" id="CP000261">
    <property type="protein sequence ID" value="ABF35664.1"/>
    <property type="molecule type" value="Genomic_DNA"/>
</dbReference>
<dbReference type="SMR" id="Q1JCP4"/>
<dbReference type="KEGG" id="spj:MGAS2096_Spy0612"/>
<dbReference type="HOGENOM" id="CLU_103507_2_1_9"/>
<dbReference type="GO" id="GO:0022625">
    <property type="term" value="C:cytosolic large ribosomal subunit"/>
    <property type="evidence" value="ECO:0007669"/>
    <property type="project" value="TreeGrafter"/>
</dbReference>
<dbReference type="GO" id="GO:0003735">
    <property type="term" value="F:structural constituent of ribosome"/>
    <property type="evidence" value="ECO:0007669"/>
    <property type="project" value="InterPro"/>
</dbReference>
<dbReference type="GO" id="GO:0006412">
    <property type="term" value="P:translation"/>
    <property type="evidence" value="ECO:0007669"/>
    <property type="project" value="UniProtKB-UniRule"/>
</dbReference>
<dbReference type="FunFam" id="2.30.30.790:FF:000001">
    <property type="entry name" value="50S ribosomal protein L19"/>
    <property type="match status" value="1"/>
</dbReference>
<dbReference type="Gene3D" id="2.30.30.790">
    <property type="match status" value="1"/>
</dbReference>
<dbReference type="HAMAP" id="MF_00402">
    <property type="entry name" value="Ribosomal_bL19"/>
    <property type="match status" value="1"/>
</dbReference>
<dbReference type="InterPro" id="IPR001857">
    <property type="entry name" value="Ribosomal_bL19"/>
</dbReference>
<dbReference type="InterPro" id="IPR018257">
    <property type="entry name" value="Ribosomal_bL19_CS"/>
</dbReference>
<dbReference type="InterPro" id="IPR038657">
    <property type="entry name" value="Ribosomal_bL19_sf"/>
</dbReference>
<dbReference type="InterPro" id="IPR008991">
    <property type="entry name" value="Translation_prot_SH3-like_sf"/>
</dbReference>
<dbReference type="NCBIfam" id="TIGR01024">
    <property type="entry name" value="rplS_bact"/>
    <property type="match status" value="1"/>
</dbReference>
<dbReference type="PANTHER" id="PTHR15680:SF9">
    <property type="entry name" value="LARGE RIBOSOMAL SUBUNIT PROTEIN BL19M"/>
    <property type="match status" value="1"/>
</dbReference>
<dbReference type="PANTHER" id="PTHR15680">
    <property type="entry name" value="RIBOSOMAL PROTEIN L19"/>
    <property type="match status" value="1"/>
</dbReference>
<dbReference type="Pfam" id="PF01245">
    <property type="entry name" value="Ribosomal_L19"/>
    <property type="match status" value="1"/>
</dbReference>
<dbReference type="PIRSF" id="PIRSF002191">
    <property type="entry name" value="Ribosomal_L19"/>
    <property type="match status" value="1"/>
</dbReference>
<dbReference type="PRINTS" id="PR00061">
    <property type="entry name" value="RIBOSOMALL19"/>
</dbReference>
<dbReference type="SUPFAM" id="SSF50104">
    <property type="entry name" value="Translation proteins SH3-like domain"/>
    <property type="match status" value="1"/>
</dbReference>
<dbReference type="PROSITE" id="PS01015">
    <property type="entry name" value="RIBOSOMAL_L19"/>
    <property type="match status" value="1"/>
</dbReference>
<sequence length="115" mass="13145">MNPLIQSLTEGQLRSDIPNFRPGDTVRVHAKVVEGTRERIQIFEGVVISRKGQGISEMYTVRKISGGIGVERTFPIHTPRVDKIEVIRHGKVRRAKLYYLRALQGKAARIKEIRR</sequence>
<protein>
    <recommendedName>
        <fullName evidence="1">Large ribosomal subunit protein bL19</fullName>
    </recommendedName>
    <alternativeName>
        <fullName evidence="2">50S ribosomal protein L19</fullName>
    </alternativeName>
</protein>